<gene>
    <name evidence="1" type="primary">mdoG</name>
    <name evidence="1" type="synonym">opgG</name>
    <name type="ordered locus">ECED1_1194</name>
</gene>
<keyword id="KW-0574">Periplasm</keyword>
<keyword id="KW-0732">Signal</keyword>
<organism>
    <name type="scientific">Escherichia coli O81 (strain ED1a)</name>
    <dbReference type="NCBI Taxonomy" id="585397"/>
    <lineage>
        <taxon>Bacteria</taxon>
        <taxon>Pseudomonadati</taxon>
        <taxon>Pseudomonadota</taxon>
        <taxon>Gammaproteobacteria</taxon>
        <taxon>Enterobacterales</taxon>
        <taxon>Enterobacteriaceae</taxon>
        <taxon>Escherichia</taxon>
    </lineage>
</organism>
<evidence type="ECO:0000255" key="1">
    <source>
        <dbReference type="HAMAP-Rule" id="MF_01069"/>
    </source>
</evidence>
<sequence>MMKMRWLSAAVMLTLYTSSSWAFSIDDVAKQAQSLAGKGYEAPKSNLPSVFRDMKYADYQQIQFNHDKAYWNNLKTPFKLEFYHQGMYFDTPVKINEVTATAVKRIKYSPDYFTFGDVQHDKDTVKDLGFAGFKVLYPINSKDKNDEIVSMLGASYFRVIGAGQVYGLSARGLAIDTALPSGEEFPRFKEFWIERPKPTDKRLTIYALLDSPRATGAYKFVVMPGRDTVVDVQSKIYLRDKVGKLGVAPLTSMFLFGPNQPSPANNYRPELHDSNGLSIHAGNGEWIWRPLNNPKHLAVSSFSMENPQGFGLLQRGRDFSRFEDLDDRYDLRPSAWVTPKGEWGKGSVELVEIPTNDETNDNIVAYWTPDQLPEPGKEMNFKYTITFSRDEDKLHAPDNAWVQQTRRSTGDVKQSNLIRQPDGTIAFVVDFTGAEMKKLPEDTPVTAQTSIGDNGEIVESTVRYNPVTKGWRLVMRVKVKDAKKTTEMRAALVNADQTLSETWSYQLPANE</sequence>
<comment type="function">
    <text evidence="1">Involved in the biosynthesis of osmoregulated periplasmic glucans (OPGs).</text>
</comment>
<comment type="pathway">
    <text evidence="1">Glycan metabolism; osmoregulated periplasmic glucan (OPG) biosynthesis.</text>
</comment>
<comment type="subcellular location">
    <subcellularLocation>
        <location evidence="1">Periplasm</location>
    </subcellularLocation>
</comment>
<comment type="similarity">
    <text evidence="1">Belongs to the OpgD/OpgG family.</text>
</comment>
<feature type="signal peptide" evidence="1">
    <location>
        <begin position="1"/>
        <end position="22"/>
    </location>
</feature>
<feature type="chain" id="PRO_1000149748" description="Glucans biosynthesis protein G">
    <location>
        <begin position="23"/>
        <end position="511"/>
    </location>
</feature>
<protein>
    <recommendedName>
        <fullName evidence="1">Glucans biosynthesis protein G</fullName>
    </recommendedName>
</protein>
<dbReference type="EMBL" id="CU928162">
    <property type="protein sequence ID" value="CAR07395.1"/>
    <property type="molecule type" value="Genomic_DNA"/>
</dbReference>
<dbReference type="RefSeq" id="WP_001300662.1">
    <property type="nucleotide sequence ID" value="NC_011745.1"/>
</dbReference>
<dbReference type="SMR" id="B7MTI1"/>
<dbReference type="GeneID" id="93776366"/>
<dbReference type="KEGG" id="ecq:ECED1_1194"/>
<dbReference type="HOGENOM" id="CLU_023403_2_0_6"/>
<dbReference type="UniPathway" id="UPA00637"/>
<dbReference type="Proteomes" id="UP000000748">
    <property type="component" value="Chromosome"/>
</dbReference>
<dbReference type="GO" id="GO:0030288">
    <property type="term" value="C:outer membrane-bounded periplasmic space"/>
    <property type="evidence" value="ECO:0007669"/>
    <property type="project" value="TreeGrafter"/>
</dbReference>
<dbReference type="GO" id="GO:0030246">
    <property type="term" value="F:carbohydrate binding"/>
    <property type="evidence" value="ECO:0007669"/>
    <property type="project" value="InterPro"/>
</dbReference>
<dbReference type="GO" id="GO:0003824">
    <property type="term" value="F:catalytic activity"/>
    <property type="evidence" value="ECO:0007669"/>
    <property type="project" value="InterPro"/>
</dbReference>
<dbReference type="GO" id="GO:0051274">
    <property type="term" value="P:beta-glucan biosynthetic process"/>
    <property type="evidence" value="ECO:0007669"/>
    <property type="project" value="TreeGrafter"/>
</dbReference>
<dbReference type="FunFam" id="2.60.40.10:FF:000294">
    <property type="entry name" value="Glucans biosynthesis protein G"/>
    <property type="match status" value="1"/>
</dbReference>
<dbReference type="FunFam" id="2.70.98.10:FF:000001">
    <property type="entry name" value="Glucans biosynthesis protein G"/>
    <property type="match status" value="1"/>
</dbReference>
<dbReference type="Gene3D" id="2.70.98.10">
    <property type="match status" value="1"/>
</dbReference>
<dbReference type="Gene3D" id="2.60.40.10">
    <property type="entry name" value="Immunoglobulins"/>
    <property type="match status" value="1"/>
</dbReference>
<dbReference type="HAMAP" id="MF_01069">
    <property type="entry name" value="MdoG_OpgG"/>
    <property type="match status" value="1"/>
</dbReference>
<dbReference type="InterPro" id="IPR011013">
    <property type="entry name" value="Gal_mutarotase_sf_dom"/>
</dbReference>
<dbReference type="InterPro" id="IPR014718">
    <property type="entry name" value="GH-type_carb-bd"/>
</dbReference>
<dbReference type="InterPro" id="IPR014438">
    <property type="entry name" value="Glucan_biosyn_MdoG/MdoD"/>
</dbReference>
<dbReference type="InterPro" id="IPR007444">
    <property type="entry name" value="Glucan_biosyn_MdoG_C"/>
</dbReference>
<dbReference type="InterPro" id="IPR013783">
    <property type="entry name" value="Ig-like_fold"/>
</dbReference>
<dbReference type="InterPro" id="IPR014756">
    <property type="entry name" value="Ig_E-set"/>
</dbReference>
<dbReference type="InterPro" id="IPR023704">
    <property type="entry name" value="MdoG_OpgG"/>
</dbReference>
<dbReference type="PANTHER" id="PTHR30504">
    <property type="entry name" value="GLUCANS BIOSYNTHESIS PROTEIN"/>
    <property type="match status" value="1"/>
</dbReference>
<dbReference type="PANTHER" id="PTHR30504:SF4">
    <property type="entry name" value="GLUCANS BIOSYNTHESIS PROTEIN G"/>
    <property type="match status" value="1"/>
</dbReference>
<dbReference type="Pfam" id="PF04349">
    <property type="entry name" value="MdoG"/>
    <property type="match status" value="1"/>
</dbReference>
<dbReference type="PIRSF" id="PIRSF006281">
    <property type="entry name" value="MdoG"/>
    <property type="match status" value="1"/>
</dbReference>
<dbReference type="SUPFAM" id="SSF81296">
    <property type="entry name" value="E set domains"/>
    <property type="match status" value="1"/>
</dbReference>
<dbReference type="SUPFAM" id="SSF74650">
    <property type="entry name" value="Galactose mutarotase-like"/>
    <property type="match status" value="1"/>
</dbReference>
<name>OPGG_ECO81</name>
<accession>B7MTI1</accession>
<reference key="1">
    <citation type="journal article" date="2009" name="PLoS Genet.">
        <title>Organised genome dynamics in the Escherichia coli species results in highly diverse adaptive paths.</title>
        <authorList>
            <person name="Touchon M."/>
            <person name="Hoede C."/>
            <person name="Tenaillon O."/>
            <person name="Barbe V."/>
            <person name="Baeriswyl S."/>
            <person name="Bidet P."/>
            <person name="Bingen E."/>
            <person name="Bonacorsi S."/>
            <person name="Bouchier C."/>
            <person name="Bouvet O."/>
            <person name="Calteau A."/>
            <person name="Chiapello H."/>
            <person name="Clermont O."/>
            <person name="Cruveiller S."/>
            <person name="Danchin A."/>
            <person name="Diard M."/>
            <person name="Dossat C."/>
            <person name="Karoui M.E."/>
            <person name="Frapy E."/>
            <person name="Garry L."/>
            <person name="Ghigo J.M."/>
            <person name="Gilles A.M."/>
            <person name="Johnson J."/>
            <person name="Le Bouguenec C."/>
            <person name="Lescat M."/>
            <person name="Mangenot S."/>
            <person name="Martinez-Jehanne V."/>
            <person name="Matic I."/>
            <person name="Nassif X."/>
            <person name="Oztas S."/>
            <person name="Petit M.A."/>
            <person name="Pichon C."/>
            <person name="Rouy Z."/>
            <person name="Ruf C.S."/>
            <person name="Schneider D."/>
            <person name="Tourret J."/>
            <person name="Vacherie B."/>
            <person name="Vallenet D."/>
            <person name="Medigue C."/>
            <person name="Rocha E.P.C."/>
            <person name="Denamur E."/>
        </authorList>
    </citation>
    <scope>NUCLEOTIDE SEQUENCE [LARGE SCALE GENOMIC DNA]</scope>
    <source>
        <strain>ED1a</strain>
    </source>
</reference>
<proteinExistence type="inferred from homology"/>